<sequence>MSNVHQFDTQTMAESPQIRRDMGRLCATWPSKDSEDGAGTALRAATPLTANGATTTGLSVTLAPKDMQRNHLLKMPTATIEKPTITATIASSSSTSTSTTRKSVTATRSLKLNPNILLPTLRILARGLLLPALILAILVGSSQAGFACLSNPCVFGVCIDGLNSSYSCYCIDGYTGIQCQTNWDECWSSPCQNGGTCVDGVAYYNCTCPEGFSGSNCEENVDECMSNPCQNGGLCRDRTNGYICTCQPGYLGSHCELDVAVCETGTGARCQHGGECIEGPGLEFTCDCPAGWHGRICQEEINECASSPCQNGGVCVDKLAAYACACPMGYTGINCEEEILICADNPCQNNALCLMEEGVPTCYCVPDYHGEKCEFQYDECQLGPRCMNGGVCIDGVDTFSCSCPPLLTGMLCECLMVGEESLDCNYTAPATQSPPRRTTTTSTMAPPTVRPVTPPETTVSPSRASEEVEIIVVTTSAPAEVVTSVLSPSSSSSSSEEGVSVEIKTPTVAPPESGSHSISVEQTTAVPAQPEPESEQEPESKPHPESESASESETETEEEIIPGTTARPPTSRSSSSSEESPSIFTTLPPLPGKPQTSASSESSGEVVTSEEYTTVPHFEVSGSKSESGSEEVTTVRPTAAPSITISVDITSSGSSSSSSESVEVFTTPAPVFVQRVTTIETSISIDYVTPTPLPETTTPRVVPVPRPTFAPEPPLDVVETTASTHHLWTEVPTTAAPFFTEYPAEVLITTHRTSAGRFTTVQPPAGVTTTSPTEDSSVELPTPHTPQIVVTILDSNEVIPSLITTTGSPTTHHHHHHHPHHEAEGTTLQPLEEDEHHHHHHHDEFTTPQPVEITTGHPLQTEDLIGVQEPAVVTTESPFAPAETTVVPVVVPATIAPLGTAAPPATPAPVPPATTTPPPSPPSLATETPTLPPTLPPVTLPPVTQPPPTIPPTPPSTQSAQTLPPPTSAINVYTTPDGPPTASQTKPSVTESSEEVEGTNTVSTGGRGSGGVPEEKAGDVDCIKLGCYNGGTCVTTSEGSRCVCRFDRQGPLCELPIIIRNAAFSGDSYVSHRIYKDIGGHESLDAVLPMHIQLKVRTRATNGLIMLAAAQGTKGGHYMALFLQKGLMQFQFSCGLQTMLLSELETPVNTGHEITIRAELDFSRNYTHCNASLLVNDTLAMSGDQPTWLKLLPPRLHTPEAILNTWLHLGGAPQAPIGLIIELPPAQSGSGFTGCLHTLRINGQAREIFGDALDGFGITECGSLACLSSPCRNGAACIKIETNDLDENGEKAEKWKCKCPTGYMGPTCEISVCEDNPCQYGGTCVQFPGSGYLCLCPLGKHGHYCEHNLEVALPSFSGSVNGLSSFVAYTVPIPLEYSLELSFKILPQTMSQISLLAFFGQSGYHDEKSDHLAVSFIQGYIMLTWNLGAGPRRIFTQKPIDFRLDAPRVPYEIKVGRIGRQAWLSVDGKFNITGRSPGSGSRMDVLPILYLGGHEIANFNTLPHDLPLHSGFQGCIYDVQLKAGQVTVPLQETRGVRGRGVGQCGTRECHRHACQHDGACLQHGATFTCICQEGWYGPLCAQPTNPCDSFNNKCYEDATCVPLVNGYECDCPVGRTGKNCEEVIRSLSDVSLTGRRSYLAVRWPYLYDGGDKLGAKRSQMVSYRNFTKKLMPPKPITTPSSHFVMKLLNEVEKQRSFSPVPLMGSKSFEEHHRVQFFFIEFQLRPLSERGLLLYFGTLNNNQDKKIGFVSLSLQGGVVEFRISGPSNHVTVVRSVRMLAIGEWHKIKMAQRGRWLTLWVEGSASSALAPSAEVLVEPDSLLYIGGLKDVSKLPHNAISGFPIPFRGCVRGLVVSGTRIVLNETNIVESRNIRDCDGTACGGDSCESGGHCWLDEKLQPHCICPEYAKGDRCEYSETCKLIPCKNNGRCLRSGRCSCPNGWGGFYCEIAMSKPTTPSFRGNSYLILPPPRIPMKDKRRGPSLYVRPREAIQVSLNFSTIEPDGLLLWSEHERSKFLGLGLEAGHLKLASNLLGSTNDTVRAPASGFIADGAWHWTSVLLDRSRLELQLDGEVIFTERLPEGGRSLGSTTPRSTLAGRRKNSSKEPTISYEDVFYLGGFPNSDSVSRRTKGRFFDPFKGCLQDIQFGAEPTAIISDFSTYQGENIGSCDLHGDEPLTV</sequence>
<organism>
    <name type="scientific">Drosophila melanogaster</name>
    <name type="common">Fruit fly</name>
    <dbReference type="NCBI Taxonomy" id="7227"/>
    <lineage>
        <taxon>Eukaryota</taxon>
        <taxon>Metazoa</taxon>
        <taxon>Ecdysozoa</taxon>
        <taxon>Arthropoda</taxon>
        <taxon>Hexapoda</taxon>
        <taxon>Insecta</taxon>
        <taxon>Pterygota</taxon>
        <taxon>Neoptera</taxon>
        <taxon>Endopterygota</taxon>
        <taxon>Diptera</taxon>
        <taxon>Brachycera</taxon>
        <taxon>Muscomorpha</taxon>
        <taxon>Ephydroidea</taxon>
        <taxon>Drosophilidae</taxon>
        <taxon>Drosophila</taxon>
        <taxon>Sophophora</taxon>
    </lineage>
</organism>
<accession>A0A1F4</accession>
<accession>Q06PM7</accession>
<accession>Q400N0</accession>
<accession>Q6IHY1</accession>
<accession>Q8MRJ7</accession>
<comment type="function">
    <text evidence="7 8">Essential for the formation of matrix-filled interrhabdomeral space: critical for the formation of epithelial lumina in the retina. Acts together with prominin (prom) and the cell adhesion molecule chaoptin (chp) to choreograph the partitioning of rhabdomeres into an open system.</text>
</comment>
<comment type="subcellular location">
    <subcellularLocation>
        <location evidence="10">Membrane</location>
        <topology evidence="10">Single-pass membrane protein</topology>
    </subcellularLocation>
    <subcellularLocation>
        <location evidence="7 8">Secreted</location>
    </subcellularLocation>
    <text>Secreted by photoreceptor cells, through the stalk membrane into the interrhabdomeral space (IRS). Although secreted, lacks a canonical signal sequence and contains a predicted transmembrane domain. The discrepancy may be explained by protein cleavage after the transmembrane region.</text>
</comment>
<comment type="tissue specificity">
    <text evidence="8">Expressed from the beginning of rhabdomere biogenesis (48 hours after pupal formation), when it decorates the entire photoreceptor apical surface.</text>
</comment>
<comment type="developmental stage">
    <text evidence="7">Expressed during embryonic, larval, and adult stages.</text>
</comment>
<comment type="disruption phenotype">
    <text evidence="8">Flies exhibit a closed rhabdomere system, rhabdomeres within each ommatidium are fused to each other.</text>
</comment>
<comment type="similarity">
    <text evidence="10">Belongs to the EYS family.</text>
</comment>
<comment type="sequence caution" evidence="10">
    <conflict type="erroneous gene model prediction">
        <sequence resource="EMBL-CDS" id="DAA03484"/>
    </conflict>
</comment>
<evidence type="ECO:0000255" key="1"/>
<evidence type="ECO:0000255" key="2">
    <source>
        <dbReference type="PROSITE-ProRule" id="PRU00076"/>
    </source>
</evidence>
<evidence type="ECO:0000255" key="3">
    <source>
        <dbReference type="PROSITE-ProRule" id="PRU00122"/>
    </source>
</evidence>
<evidence type="ECO:0000256" key="4">
    <source>
        <dbReference type="SAM" id="MobiDB-lite"/>
    </source>
</evidence>
<evidence type="ECO:0000269" key="5">
    <source>
    </source>
</evidence>
<evidence type="ECO:0000269" key="6">
    <source>
    </source>
</evidence>
<evidence type="ECO:0000269" key="7">
    <source>
    </source>
</evidence>
<evidence type="ECO:0000269" key="8">
    <source>
    </source>
</evidence>
<evidence type="ECO:0000269" key="9">
    <source>
    </source>
</evidence>
<evidence type="ECO:0000305" key="10"/>
<evidence type="ECO:0000312" key="11">
    <source>
        <dbReference type="EMBL" id="AAM50220.1"/>
    </source>
</evidence>
<evidence type="ECO:0000312" key="12">
    <source>
        <dbReference type="EMBL" id="ABH07112.1"/>
    </source>
</evidence>
<evidence type="ECO:0000312" key="13">
    <source>
        <dbReference type="EMBL" id="ABJ09588.1"/>
    </source>
</evidence>
<evidence type="ECO:0000312" key="14">
    <source>
        <dbReference type="EMBL" id="DAA03484.1"/>
    </source>
</evidence>
<evidence type="ECO:0000312" key="15">
    <source>
        <dbReference type="FlyBase" id="FBgn0031414"/>
    </source>
</evidence>
<feature type="chain" id="PRO_0000339236" description="Protein eyes shut">
    <location>
        <begin position="1"/>
        <end position="2176"/>
    </location>
</feature>
<feature type="topological domain" description="Cytoplasmic" evidence="1">
    <location>
        <begin position="1"/>
        <end position="122"/>
    </location>
</feature>
<feature type="transmembrane region" description="Helical" evidence="1">
    <location>
        <begin position="123"/>
        <end position="143"/>
    </location>
</feature>
<feature type="topological domain" description="Extracellular" evidence="1">
    <location>
        <begin position="144"/>
        <end position="2176"/>
    </location>
</feature>
<feature type="domain" description="EGF-like 1" evidence="2">
    <location>
        <begin position="144"/>
        <end position="180"/>
    </location>
</feature>
<feature type="domain" description="EGF-like 2; calcium-binding" evidence="2">
    <location>
        <begin position="182"/>
        <end position="218"/>
    </location>
</feature>
<feature type="domain" description="EGF-like 3; calcium-binding" evidence="2">
    <location>
        <begin position="220"/>
        <end position="256"/>
    </location>
</feature>
<feature type="domain" description="EGF-like 4" evidence="2">
    <location>
        <begin position="258"/>
        <end position="298"/>
    </location>
</feature>
<feature type="domain" description="EGF-like 5; calcium-binding" evidence="2">
    <location>
        <begin position="300"/>
        <end position="336"/>
    </location>
</feature>
<feature type="domain" description="EGF-like 6" evidence="2">
    <location>
        <begin position="338"/>
        <end position="374"/>
    </location>
</feature>
<feature type="domain" description="EGF-like 7; calcium-binding" evidence="2">
    <location>
        <begin position="376"/>
        <end position="413"/>
    </location>
</feature>
<feature type="domain" description="EGF-like 8" evidence="2">
    <location>
        <begin position="1018"/>
        <end position="1054"/>
    </location>
</feature>
<feature type="domain" description="Laminin G-like 1" evidence="3">
    <location>
        <begin position="1059"/>
        <end position="1266"/>
    </location>
</feature>
<feature type="domain" description="EGF-like 9" evidence="2">
    <location>
        <begin position="1309"/>
        <end position="1346"/>
    </location>
</feature>
<feature type="domain" description="Laminin G-like 2" evidence="3">
    <location>
        <begin position="1353"/>
        <end position="1549"/>
    </location>
</feature>
<feature type="domain" description="EGF-like 10" evidence="2">
    <location>
        <begin position="1545"/>
        <end position="1581"/>
    </location>
</feature>
<feature type="domain" description="EGF-like 11" evidence="2">
    <location>
        <begin position="1583"/>
        <end position="1621"/>
    </location>
</feature>
<feature type="domain" description="Laminin G-like 3" evidence="3">
    <location>
        <begin position="1692"/>
        <end position="1879"/>
    </location>
</feature>
<feature type="domain" description="EGF-like 12" evidence="2">
    <location>
        <begin position="1875"/>
        <end position="1912"/>
    </location>
</feature>
<feature type="domain" description="EGF-like 13" evidence="2">
    <location>
        <begin position="1913"/>
        <end position="1946"/>
    </location>
</feature>
<feature type="domain" description="Laminin G-like 4" evidence="3">
    <location>
        <begin position="1952"/>
        <end position="2166"/>
    </location>
</feature>
<feature type="region of interest" description="Disordered" evidence="4">
    <location>
        <begin position="429"/>
        <end position="465"/>
    </location>
</feature>
<feature type="region of interest" description="Disordered" evidence="4">
    <location>
        <begin position="482"/>
        <end position="639"/>
    </location>
</feature>
<feature type="region of interest" description="Disordered" evidence="4">
    <location>
        <begin position="757"/>
        <end position="783"/>
    </location>
</feature>
<feature type="region of interest" description="Disordered" evidence="4">
    <location>
        <begin position="802"/>
        <end position="854"/>
    </location>
</feature>
<feature type="region of interest" description="Disordered" evidence="4">
    <location>
        <begin position="902"/>
        <end position="1014"/>
    </location>
</feature>
<feature type="region of interest" description="Disordered" evidence="4">
    <location>
        <begin position="2080"/>
        <end position="2101"/>
    </location>
</feature>
<feature type="compositionally biased region" description="Low complexity" evidence="4">
    <location>
        <begin position="429"/>
        <end position="447"/>
    </location>
</feature>
<feature type="compositionally biased region" description="Low complexity" evidence="4">
    <location>
        <begin position="482"/>
        <end position="502"/>
    </location>
</feature>
<feature type="compositionally biased region" description="Polar residues" evidence="4">
    <location>
        <begin position="514"/>
        <end position="526"/>
    </location>
</feature>
<feature type="compositionally biased region" description="Acidic residues" evidence="4">
    <location>
        <begin position="548"/>
        <end position="560"/>
    </location>
</feature>
<feature type="compositionally biased region" description="Low complexity" evidence="4">
    <location>
        <begin position="564"/>
        <end position="582"/>
    </location>
</feature>
<feature type="compositionally biased region" description="Low complexity" evidence="4">
    <location>
        <begin position="596"/>
        <end position="632"/>
    </location>
</feature>
<feature type="compositionally biased region" description="Polar residues" evidence="4">
    <location>
        <begin position="757"/>
        <end position="775"/>
    </location>
</feature>
<feature type="compositionally biased region" description="Basic residues" evidence="4">
    <location>
        <begin position="811"/>
        <end position="820"/>
    </location>
</feature>
<feature type="compositionally biased region" description="Pro residues" evidence="4">
    <location>
        <begin position="904"/>
        <end position="922"/>
    </location>
</feature>
<feature type="compositionally biased region" description="Pro residues" evidence="4">
    <location>
        <begin position="930"/>
        <end position="955"/>
    </location>
</feature>
<feature type="glycosylation site" description="N-linked (GlcNAc...) asparagine" evidence="1">
    <location>
        <position position="163"/>
    </location>
</feature>
<feature type="glycosylation site" description="N-linked (GlcNAc...) asparagine" evidence="1">
    <location>
        <position position="205"/>
    </location>
</feature>
<feature type="glycosylation site" description="N-linked (GlcNAc...) asparagine" evidence="1">
    <location>
        <position position="425"/>
    </location>
</feature>
<feature type="glycosylation site" description="N-linked (GlcNAc...) asparagine" evidence="1">
    <location>
        <position position="1165"/>
    </location>
</feature>
<feature type="glycosylation site" description="N-linked (GlcNAc...) asparagine" evidence="1">
    <location>
        <position position="1170"/>
    </location>
</feature>
<feature type="glycosylation site" description="N-linked (GlcNAc...) asparagine" evidence="1">
    <location>
        <position position="1176"/>
    </location>
</feature>
<feature type="glycosylation site" description="N-linked (GlcNAc...) asparagine" evidence="9">
    <location>
        <position position="1471"/>
    </location>
</feature>
<feature type="glycosylation site" description="N-linked (GlcNAc...) asparagine" evidence="1">
    <location>
        <position position="1665"/>
    </location>
</feature>
<feature type="glycosylation site" description="N-linked (GlcNAc...) asparagine" evidence="1">
    <location>
        <position position="1861"/>
    </location>
</feature>
<feature type="glycosylation site" description="N-linked (GlcNAc...) asparagine" evidence="1">
    <location>
        <position position="1994"/>
    </location>
</feature>
<feature type="glycosylation site" description="N-linked (GlcNAc...) asparagine" evidence="1">
    <location>
        <position position="2035"/>
    </location>
</feature>
<feature type="glycosylation site" description="N-linked (GlcNAc...) asparagine" evidence="1">
    <location>
        <position position="2099"/>
    </location>
</feature>
<feature type="disulfide bond" evidence="1">
    <location>
        <begin position="148"/>
        <end position="158"/>
    </location>
</feature>
<feature type="disulfide bond" evidence="1">
    <location>
        <begin position="153"/>
        <end position="168"/>
    </location>
</feature>
<feature type="disulfide bond" evidence="1">
    <location>
        <begin position="170"/>
        <end position="179"/>
    </location>
</feature>
<feature type="disulfide bond" evidence="1">
    <location>
        <begin position="186"/>
        <end position="197"/>
    </location>
</feature>
<feature type="disulfide bond" evidence="1">
    <location>
        <begin position="191"/>
        <end position="206"/>
    </location>
</feature>
<feature type="disulfide bond" evidence="1">
    <location>
        <begin position="208"/>
        <end position="217"/>
    </location>
</feature>
<feature type="disulfide bond" evidence="1">
    <location>
        <begin position="224"/>
        <end position="235"/>
    </location>
</feature>
<feature type="disulfide bond" evidence="1">
    <location>
        <begin position="229"/>
        <end position="244"/>
    </location>
</feature>
<feature type="disulfide bond" evidence="1">
    <location>
        <begin position="246"/>
        <end position="255"/>
    </location>
</feature>
<feature type="disulfide bond" evidence="1">
    <location>
        <begin position="262"/>
        <end position="276"/>
    </location>
</feature>
<feature type="disulfide bond" evidence="1">
    <location>
        <begin position="270"/>
        <end position="286"/>
    </location>
</feature>
<feature type="disulfide bond" evidence="1">
    <location>
        <begin position="288"/>
        <end position="297"/>
    </location>
</feature>
<feature type="disulfide bond" evidence="1">
    <location>
        <begin position="304"/>
        <end position="315"/>
    </location>
</feature>
<feature type="disulfide bond" evidence="1">
    <location>
        <begin position="309"/>
        <end position="324"/>
    </location>
</feature>
<feature type="disulfide bond" evidence="1">
    <location>
        <begin position="326"/>
        <end position="335"/>
    </location>
</feature>
<feature type="disulfide bond" evidence="1">
    <location>
        <begin position="342"/>
        <end position="353"/>
    </location>
</feature>
<feature type="disulfide bond" evidence="1">
    <location>
        <begin position="347"/>
        <end position="362"/>
    </location>
</feature>
<feature type="disulfide bond" evidence="1">
    <location>
        <begin position="364"/>
        <end position="373"/>
    </location>
</feature>
<feature type="disulfide bond" evidence="1">
    <location>
        <begin position="380"/>
        <end position="392"/>
    </location>
</feature>
<feature type="disulfide bond" evidence="1">
    <location>
        <begin position="386"/>
        <end position="401"/>
    </location>
</feature>
<feature type="disulfide bond" evidence="1">
    <location>
        <begin position="403"/>
        <end position="412"/>
    </location>
</feature>
<feature type="disulfide bond" evidence="1">
    <location>
        <begin position="1022"/>
        <end position="1033"/>
    </location>
</feature>
<feature type="disulfide bond" evidence="1">
    <location>
        <begin position="1027"/>
        <end position="1042"/>
    </location>
</feature>
<feature type="disulfide bond" evidence="1">
    <location>
        <begin position="1044"/>
        <end position="1053"/>
    </location>
</feature>
<feature type="disulfide bond" evidence="1">
    <location>
        <begin position="1313"/>
        <end position="1324"/>
    </location>
</feature>
<feature type="disulfide bond" evidence="1">
    <location>
        <begin position="1318"/>
        <end position="1334"/>
    </location>
</feature>
<feature type="disulfide bond" evidence="1">
    <location>
        <begin position="1336"/>
        <end position="1345"/>
    </location>
</feature>
<feature type="disulfide bond" evidence="1">
    <location>
        <begin position="1549"/>
        <end position="1560"/>
    </location>
</feature>
<feature type="disulfide bond" evidence="1">
    <location>
        <begin position="1554"/>
        <end position="1569"/>
    </location>
</feature>
<feature type="disulfide bond" evidence="1">
    <location>
        <begin position="1571"/>
        <end position="1580"/>
    </location>
</feature>
<feature type="disulfide bond" evidence="1">
    <location>
        <begin position="1587"/>
        <end position="1600"/>
    </location>
</feature>
<feature type="disulfide bond" evidence="1">
    <location>
        <begin position="1594"/>
        <end position="1609"/>
    </location>
</feature>
<feature type="disulfide bond" evidence="1">
    <location>
        <begin position="1611"/>
        <end position="1620"/>
    </location>
</feature>
<feature type="disulfide bond" evidence="1">
    <location>
        <begin position="1879"/>
        <end position="1890"/>
    </location>
</feature>
<feature type="disulfide bond" evidence="1">
    <location>
        <begin position="1884"/>
        <end position="1900"/>
    </location>
</feature>
<feature type="disulfide bond" evidence="1">
    <location>
        <begin position="1902"/>
        <end position="1911"/>
    </location>
</feature>
<feature type="disulfide bond" evidence="1">
    <location>
        <begin position="1917"/>
        <end position="1928"/>
    </location>
</feature>
<feature type="disulfide bond" evidence="1">
    <location>
        <begin position="1922"/>
        <end position="1934"/>
    </location>
</feature>
<feature type="disulfide bond" evidence="1">
    <location>
        <begin position="1936"/>
        <end position="1945"/>
    </location>
</feature>
<feature type="mutagenesis site" description="In eys(734); fails to form an interrhabdomeral space." evidence="7">
    <original>E</original>
    <variation>K</variation>
    <location>
        <position position="521"/>
    </location>
</feature>
<reference evidence="10 13" key="1">
    <citation type="journal article" date="2006" name="Dev. Cell">
        <title>The agrin/perlecan-related protein eyes shut is essential for epithelial lumen formation in the Drosophila retina.</title>
        <authorList>
            <person name="Husain N."/>
            <person name="Pellikka M."/>
            <person name="Hong H."/>
            <person name="Klimentova T."/>
            <person name="Choe K.-M."/>
            <person name="Clandinin T.R."/>
            <person name="Tepass U."/>
        </authorList>
    </citation>
    <scope>NUCLEOTIDE SEQUENCE [MRNA]</scope>
    <scope>FUNCTION</scope>
    <scope>SUBCELLULAR LOCATION</scope>
    <scope>DEVELOPMENTAL STAGE</scope>
    <scope>MUTAGENESIS OF GLU-521</scope>
</reference>
<reference evidence="10 12" key="2">
    <citation type="journal article" date="2006" name="Nature">
        <title>Transforming the architecture of compound eyes.</title>
        <authorList>
            <person name="Zelhof A.C."/>
            <person name="Hardy R.W."/>
            <person name="Becker A."/>
            <person name="Zuker C.S."/>
        </authorList>
    </citation>
    <scope>NUCLEOTIDE SEQUENCE [MRNA] OF 12-2176</scope>
    <scope>FUNCTION</scope>
    <scope>SUBCELLULAR LOCATION</scope>
    <scope>TISSUE SPECIFICITY</scope>
    <scope>DISRUPTION PHENOTYPE</scope>
</reference>
<reference key="3">
    <citation type="journal article" date="2000" name="Science">
        <title>The genome sequence of Drosophila melanogaster.</title>
        <authorList>
            <person name="Adams M.D."/>
            <person name="Celniker S.E."/>
            <person name="Holt R.A."/>
            <person name="Evans C.A."/>
            <person name="Gocayne J.D."/>
            <person name="Amanatides P.G."/>
            <person name="Scherer S.E."/>
            <person name="Li P.W."/>
            <person name="Hoskins R.A."/>
            <person name="Galle R.F."/>
            <person name="George R.A."/>
            <person name="Lewis S.E."/>
            <person name="Richards S."/>
            <person name="Ashburner M."/>
            <person name="Henderson S.N."/>
            <person name="Sutton G.G."/>
            <person name="Wortman J.R."/>
            <person name="Yandell M.D."/>
            <person name="Zhang Q."/>
            <person name="Chen L.X."/>
            <person name="Brandon R.C."/>
            <person name="Rogers Y.-H.C."/>
            <person name="Blazej R.G."/>
            <person name="Champe M."/>
            <person name="Pfeiffer B.D."/>
            <person name="Wan K.H."/>
            <person name="Doyle C."/>
            <person name="Baxter E.G."/>
            <person name="Helt G."/>
            <person name="Nelson C.R."/>
            <person name="Miklos G.L.G."/>
            <person name="Abril J.F."/>
            <person name="Agbayani A."/>
            <person name="An H.-J."/>
            <person name="Andrews-Pfannkoch C."/>
            <person name="Baldwin D."/>
            <person name="Ballew R.M."/>
            <person name="Basu A."/>
            <person name="Baxendale J."/>
            <person name="Bayraktaroglu L."/>
            <person name="Beasley E.M."/>
            <person name="Beeson K.Y."/>
            <person name="Benos P.V."/>
            <person name="Berman B.P."/>
            <person name="Bhandari D."/>
            <person name="Bolshakov S."/>
            <person name="Borkova D."/>
            <person name="Botchan M.R."/>
            <person name="Bouck J."/>
            <person name="Brokstein P."/>
            <person name="Brottier P."/>
            <person name="Burtis K.C."/>
            <person name="Busam D.A."/>
            <person name="Butler H."/>
            <person name="Cadieu E."/>
            <person name="Center A."/>
            <person name="Chandra I."/>
            <person name="Cherry J.M."/>
            <person name="Cawley S."/>
            <person name="Dahlke C."/>
            <person name="Davenport L.B."/>
            <person name="Davies P."/>
            <person name="de Pablos B."/>
            <person name="Delcher A."/>
            <person name="Deng Z."/>
            <person name="Mays A.D."/>
            <person name="Dew I."/>
            <person name="Dietz S.M."/>
            <person name="Dodson K."/>
            <person name="Doup L.E."/>
            <person name="Downes M."/>
            <person name="Dugan-Rocha S."/>
            <person name="Dunkov B.C."/>
            <person name="Dunn P."/>
            <person name="Durbin K.J."/>
            <person name="Evangelista C.C."/>
            <person name="Ferraz C."/>
            <person name="Ferriera S."/>
            <person name="Fleischmann W."/>
            <person name="Fosler C."/>
            <person name="Gabrielian A.E."/>
            <person name="Garg N.S."/>
            <person name="Gelbart W.M."/>
            <person name="Glasser K."/>
            <person name="Glodek A."/>
            <person name="Gong F."/>
            <person name="Gorrell J.H."/>
            <person name="Gu Z."/>
            <person name="Guan P."/>
            <person name="Harris M."/>
            <person name="Harris N.L."/>
            <person name="Harvey D.A."/>
            <person name="Heiman T.J."/>
            <person name="Hernandez J.R."/>
            <person name="Houck J."/>
            <person name="Hostin D."/>
            <person name="Houston K.A."/>
            <person name="Howland T.J."/>
            <person name="Wei M.-H."/>
            <person name="Ibegwam C."/>
            <person name="Jalali M."/>
            <person name="Kalush F."/>
            <person name="Karpen G.H."/>
            <person name="Ke Z."/>
            <person name="Kennison J.A."/>
            <person name="Ketchum K.A."/>
            <person name="Kimmel B.E."/>
            <person name="Kodira C.D."/>
            <person name="Kraft C.L."/>
            <person name="Kravitz S."/>
            <person name="Kulp D."/>
            <person name="Lai Z."/>
            <person name="Lasko P."/>
            <person name="Lei Y."/>
            <person name="Levitsky A.A."/>
            <person name="Li J.H."/>
            <person name="Li Z."/>
            <person name="Liang Y."/>
            <person name="Lin X."/>
            <person name="Liu X."/>
            <person name="Mattei B."/>
            <person name="McIntosh T.C."/>
            <person name="McLeod M.P."/>
            <person name="McPherson D."/>
            <person name="Merkulov G."/>
            <person name="Milshina N.V."/>
            <person name="Mobarry C."/>
            <person name="Morris J."/>
            <person name="Moshrefi A."/>
            <person name="Mount S.M."/>
            <person name="Moy M."/>
            <person name="Murphy B."/>
            <person name="Murphy L."/>
            <person name="Muzny D.M."/>
            <person name="Nelson D.L."/>
            <person name="Nelson D.R."/>
            <person name="Nelson K.A."/>
            <person name="Nixon K."/>
            <person name="Nusskern D.R."/>
            <person name="Pacleb J.M."/>
            <person name="Palazzolo M."/>
            <person name="Pittman G.S."/>
            <person name="Pan S."/>
            <person name="Pollard J."/>
            <person name="Puri V."/>
            <person name="Reese M.G."/>
            <person name="Reinert K."/>
            <person name="Remington K."/>
            <person name="Saunders R.D.C."/>
            <person name="Scheeler F."/>
            <person name="Shen H."/>
            <person name="Shue B.C."/>
            <person name="Siden-Kiamos I."/>
            <person name="Simpson M."/>
            <person name="Skupski M.P."/>
            <person name="Smith T.J."/>
            <person name="Spier E."/>
            <person name="Spradling A.C."/>
            <person name="Stapleton M."/>
            <person name="Strong R."/>
            <person name="Sun E."/>
            <person name="Svirskas R."/>
            <person name="Tector C."/>
            <person name="Turner R."/>
            <person name="Venter E."/>
            <person name="Wang A.H."/>
            <person name="Wang X."/>
            <person name="Wang Z.-Y."/>
            <person name="Wassarman D.A."/>
            <person name="Weinstock G.M."/>
            <person name="Weissenbach J."/>
            <person name="Williams S.M."/>
            <person name="Woodage T."/>
            <person name="Worley K.C."/>
            <person name="Wu D."/>
            <person name="Yang S."/>
            <person name="Yao Q.A."/>
            <person name="Ye J."/>
            <person name="Yeh R.-F."/>
            <person name="Zaveri J.S."/>
            <person name="Zhan M."/>
            <person name="Zhang G."/>
            <person name="Zhao Q."/>
            <person name="Zheng L."/>
            <person name="Zheng X.H."/>
            <person name="Zhong F.N."/>
            <person name="Zhong W."/>
            <person name="Zhou X."/>
            <person name="Zhu S.C."/>
            <person name="Zhu X."/>
            <person name="Smith H.O."/>
            <person name="Gibbs R.A."/>
            <person name="Myers E.W."/>
            <person name="Rubin G.M."/>
            <person name="Venter J.C."/>
        </authorList>
    </citation>
    <scope>NUCLEOTIDE SEQUENCE [LARGE SCALE GENOMIC DNA]</scope>
    <source>
        <strain evidence="5">Berkeley</strain>
    </source>
</reference>
<reference evidence="10" key="4">
    <citation type="journal article" date="2002" name="Genome Biol.">
        <title>Annotation of the Drosophila melanogaster euchromatic genome: a systematic review.</title>
        <authorList>
            <person name="Misra S."/>
            <person name="Crosby M.A."/>
            <person name="Mungall C.J."/>
            <person name="Matthews B.B."/>
            <person name="Campbell K.S."/>
            <person name="Hradecky P."/>
            <person name="Huang Y."/>
            <person name="Kaminker J.S."/>
            <person name="Millburn G.H."/>
            <person name="Prochnik S.E."/>
            <person name="Smith C.D."/>
            <person name="Tupy J.L."/>
            <person name="Whitfield E.J."/>
            <person name="Bayraktaroglu L."/>
            <person name="Berman B.P."/>
            <person name="Bettencourt B.R."/>
            <person name="Celniker S.E."/>
            <person name="de Grey A.D.N.J."/>
            <person name="Drysdale R.A."/>
            <person name="Harris N.L."/>
            <person name="Richter J."/>
            <person name="Russo S."/>
            <person name="Schroeder A.J."/>
            <person name="Shu S.Q."/>
            <person name="Stapleton M."/>
            <person name="Yamada C."/>
            <person name="Ashburner M."/>
            <person name="Gelbart W.M."/>
            <person name="Rubin G.M."/>
            <person name="Lewis S.E."/>
        </authorList>
    </citation>
    <scope>GENOME REANNOTATION</scope>
    <source>
        <strain>Berkeley</strain>
    </source>
</reference>
<reference evidence="10 11" key="5">
    <citation type="journal article" date="2002" name="Genome Biol.">
        <title>A Drosophila full-length cDNA resource.</title>
        <authorList>
            <person name="Stapleton M."/>
            <person name="Carlson J.W."/>
            <person name="Brokstein P."/>
            <person name="Yu C."/>
            <person name="Champe M."/>
            <person name="George R.A."/>
            <person name="Guarin H."/>
            <person name="Kronmiller B."/>
            <person name="Pacleb J.M."/>
            <person name="Park S."/>
            <person name="Wan K.H."/>
            <person name="Rubin G.M."/>
            <person name="Celniker S.E."/>
        </authorList>
    </citation>
    <scope>NUCLEOTIDE SEQUENCE [LARGE SCALE MRNA] OF 1660-2176</scope>
    <source>
        <strain evidence="11">Berkeley</strain>
        <tissue evidence="6">Head</tissue>
    </source>
</reference>
<reference evidence="10 14" key="6">
    <citation type="journal article" date="2003" name="Genome Biol.">
        <title>An integrated gene annotation and transcriptional profiling approach towards the full gene content of the Drosophila genome.</title>
        <authorList>
            <person name="Hild M."/>
            <person name="Beckmann B."/>
            <person name="Haas S.A."/>
            <person name="Koch B."/>
            <person name="Solovyev V."/>
            <person name="Busold C."/>
            <person name="Fellenberg K."/>
            <person name="Boutros M."/>
            <person name="Vingron M."/>
            <person name="Sauer F."/>
            <person name="Hoheisel J.D."/>
            <person name="Paro R."/>
        </authorList>
    </citation>
    <scope>IDENTIFICATION</scope>
</reference>
<reference evidence="10" key="7">
    <citation type="journal article" date="2007" name="Glycobiology">
        <title>Identification of N-glycosylated proteins from the central nervous system of Drosophila melanogaster.</title>
        <authorList>
            <person name="Koles K."/>
            <person name="Lim J.-M."/>
            <person name="Aoki K."/>
            <person name="Porterfield M."/>
            <person name="Tiemeyer M."/>
            <person name="Wells L."/>
            <person name="Panin V."/>
        </authorList>
    </citation>
    <scope>GLYCOSYLATION [LARGE SCALE ANALYSIS] AT ASN-1471</scope>
    <scope>IDENTIFICATION BY MASS SPECTROMETRY</scope>
    <source>
        <strain>Oregon-R</strain>
        <tissue evidence="9">Head</tissue>
    </source>
</reference>
<gene>
    <name evidence="13 15" type="primary">eys</name>
    <name evidence="12" type="synonym">spam</name>
    <name type="ORF">CG33955</name>
</gene>
<proteinExistence type="evidence at protein level"/>
<keyword id="KW-0106">Calcium</keyword>
<keyword id="KW-1015">Disulfide bond</keyword>
<keyword id="KW-0245">EGF-like domain</keyword>
<keyword id="KW-0325">Glycoprotein</keyword>
<keyword id="KW-0472">Membrane</keyword>
<keyword id="KW-1185">Reference proteome</keyword>
<keyword id="KW-0677">Repeat</keyword>
<keyword id="KW-0964">Secreted</keyword>
<keyword id="KW-0812">Transmembrane</keyword>
<keyword id="KW-1133">Transmembrane helix</keyword>
<name>EYS_DROME</name>
<protein>
    <recommendedName>
        <fullName>Protein eyes shut</fullName>
    </recommendedName>
    <alternativeName>
        <fullName>Protein spacemaker</fullName>
    </alternativeName>
</protein>
<dbReference type="EMBL" id="DQ991915">
    <property type="protein sequence ID" value="ABJ09588.1"/>
    <property type="molecule type" value="mRNA"/>
</dbReference>
<dbReference type="EMBL" id="DQ780942">
    <property type="protein sequence ID" value="ABH07112.1"/>
    <property type="molecule type" value="mRNA"/>
</dbReference>
<dbReference type="EMBL" id="AE014134">
    <property type="protein sequence ID" value="AAZ83988.3"/>
    <property type="molecule type" value="Genomic_DNA"/>
</dbReference>
<dbReference type="EMBL" id="AY119566">
    <property type="protein sequence ID" value="AAM50220.1"/>
    <property type="molecule type" value="mRNA"/>
</dbReference>
<dbReference type="EMBL" id="BK003285">
    <property type="protein sequence ID" value="DAA03484.1"/>
    <property type="status" value="ALT_SEQ"/>
    <property type="molecule type" value="Genomic_DNA"/>
</dbReference>
<dbReference type="RefSeq" id="NP_001027571.3">
    <property type="nucleotide sequence ID" value="NM_001032399.3"/>
</dbReference>
<dbReference type="RefSeq" id="NP_001259924.2">
    <property type="nucleotide sequence ID" value="NM_001272995.1"/>
</dbReference>
<dbReference type="BioGRID" id="533487">
    <property type="interactions" value="3"/>
</dbReference>
<dbReference type="FunCoup" id="A0A1F4">
    <property type="interactions" value="32"/>
</dbReference>
<dbReference type="STRING" id="7227.FBpp0311005"/>
<dbReference type="GlyCosmos" id="A0A1F4">
    <property type="glycosylation" value="12 sites, No reported glycans"/>
</dbReference>
<dbReference type="GlyGen" id="A0A1F4">
    <property type="glycosylation" value="17 sites"/>
</dbReference>
<dbReference type="iPTMnet" id="A0A1F4"/>
<dbReference type="PaxDb" id="7227-FBpp0112919"/>
<dbReference type="EnsemblMetazoa" id="FBtr0344662">
    <property type="protein sequence ID" value="FBpp0311004"/>
    <property type="gene ID" value="FBgn0031414"/>
</dbReference>
<dbReference type="EnsemblMetazoa" id="FBtr0344663">
    <property type="protein sequence ID" value="FBpp0311005"/>
    <property type="gene ID" value="FBgn0031414"/>
</dbReference>
<dbReference type="GeneID" id="3771890"/>
<dbReference type="KEGG" id="dme:Dmel_CG33955"/>
<dbReference type="AGR" id="FB:FBgn0031414"/>
<dbReference type="CTD" id="346007"/>
<dbReference type="FlyBase" id="FBgn0031414">
    <property type="gene designation" value="eys"/>
</dbReference>
<dbReference type="VEuPathDB" id="VectorBase:FBgn0031414"/>
<dbReference type="eggNOG" id="KOG1217">
    <property type="taxonomic scope" value="Eukaryota"/>
</dbReference>
<dbReference type="eggNOG" id="KOG3509">
    <property type="taxonomic scope" value="Eukaryota"/>
</dbReference>
<dbReference type="HOGENOM" id="CLU_002251_0_0_1"/>
<dbReference type="InParanoid" id="A0A1F4"/>
<dbReference type="OMA" id="FYCEIAL"/>
<dbReference type="OrthoDB" id="283575at2759"/>
<dbReference type="PhylomeDB" id="A0A1F4"/>
<dbReference type="BioGRID-ORCS" id="3771890">
    <property type="hits" value="0 hits in 1 CRISPR screen"/>
</dbReference>
<dbReference type="GenomeRNAi" id="3771890"/>
<dbReference type="PRO" id="PR:A0A1F4"/>
<dbReference type="Proteomes" id="UP000000803">
    <property type="component" value="Chromosome 2L"/>
</dbReference>
<dbReference type="Bgee" id="FBgn0031414">
    <property type="expression patterns" value="Expressed in transmedullary neuron Tm9 (Drosophila) in insect head and 160 other cell types or tissues"/>
</dbReference>
<dbReference type="ExpressionAtlas" id="A0A1F4">
    <property type="expression patterns" value="baseline and differential"/>
</dbReference>
<dbReference type="GO" id="GO:0009986">
    <property type="term" value="C:cell surface"/>
    <property type="evidence" value="ECO:0000314"/>
    <property type="project" value="FlyBase"/>
</dbReference>
<dbReference type="GO" id="GO:0031012">
    <property type="term" value="C:extracellular matrix"/>
    <property type="evidence" value="ECO:0000314"/>
    <property type="project" value="FlyBase"/>
</dbReference>
<dbReference type="GO" id="GO:0005576">
    <property type="term" value="C:extracellular region"/>
    <property type="evidence" value="ECO:0000314"/>
    <property type="project" value="FlyBase"/>
</dbReference>
<dbReference type="GO" id="GO:0005615">
    <property type="term" value="C:extracellular space"/>
    <property type="evidence" value="ECO:0000314"/>
    <property type="project" value="UniProtKB"/>
</dbReference>
<dbReference type="GO" id="GO:0016020">
    <property type="term" value="C:membrane"/>
    <property type="evidence" value="ECO:0007669"/>
    <property type="project" value="UniProtKB-SubCell"/>
</dbReference>
<dbReference type="GO" id="GO:0097730">
    <property type="term" value="C:non-motile cilium"/>
    <property type="evidence" value="ECO:0000314"/>
    <property type="project" value="FlyBase"/>
</dbReference>
<dbReference type="GO" id="GO:0005509">
    <property type="term" value="F:calcium ion binding"/>
    <property type="evidence" value="ECO:0007669"/>
    <property type="project" value="InterPro"/>
</dbReference>
<dbReference type="GO" id="GO:0005201">
    <property type="term" value="F:extracellular matrix structural constituent"/>
    <property type="evidence" value="ECO:0000315"/>
    <property type="project" value="FlyBase"/>
</dbReference>
<dbReference type="GO" id="GO:0000902">
    <property type="term" value="P:cell morphogenesis"/>
    <property type="evidence" value="ECO:0000315"/>
    <property type="project" value="FlyBase"/>
</dbReference>
<dbReference type="GO" id="GO:0042052">
    <property type="term" value="P:rhabdomere development"/>
    <property type="evidence" value="ECO:0000315"/>
    <property type="project" value="UniProtKB"/>
</dbReference>
<dbReference type="GO" id="GO:0010378">
    <property type="term" value="P:temperature compensation of the circadian clock"/>
    <property type="evidence" value="ECO:0000315"/>
    <property type="project" value="FlyBase"/>
</dbReference>
<dbReference type="CDD" id="cd00054">
    <property type="entry name" value="EGF_CA"/>
    <property type="match status" value="10"/>
</dbReference>
<dbReference type="CDD" id="cd00110">
    <property type="entry name" value="LamG"/>
    <property type="match status" value="4"/>
</dbReference>
<dbReference type="FunFam" id="2.10.25.10:FF:000652">
    <property type="entry name" value="Blast:Protein eyes shut"/>
    <property type="match status" value="1"/>
</dbReference>
<dbReference type="FunFam" id="2.10.25.10:FF:000683">
    <property type="entry name" value="Blast:Protein eyes shut"/>
    <property type="match status" value="1"/>
</dbReference>
<dbReference type="FunFam" id="2.10.25.10:FF:000710">
    <property type="entry name" value="Blast:Protein eyes shut"/>
    <property type="match status" value="1"/>
</dbReference>
<dbReference type="FunFam" id="2.10.25.10:FF:000739">
    <property type="entry name" value="Blast:Protein eyes shut"/>
    <property type="match status" value="1"/>
</dbReference>
<dbReference type="FunFam" id="2.60.120.200:FF:000208">
    <property type="entry name" value="Blast:Protein eyes shut"/>
    <property type="match status" value="1"/>
</dbReference>
<dbReference type="FunFam" id="2.60.120.200:FF:000216">
    <property type="entry name" value="Blast:Protein eyes shut"/>
    <property type="match status" value="1"/>
</dbReference>
<dbReference type="FunFam" id="2.10.25.10:FF:000247">
    <property type="entry name" value="Delta/notch like EGF repeat containing"/>
    <property type="match status" value="1"/>
</dbReference>
<dbReference type="FunFam" id="2.10.25.10:FF:000660">
    <property type="entry name" value="Eyes shut, isoform E"/>
    <property type="match status" value="1"/>
</dbReference>
<dbReference type="FunFam" id="2.10.25.10:FF:000662">
    <property type="entry name" value="Eyes shut, isoform E"/>
    <property type="match status" value="1"/>
</dbReference>
<dbReference type="FunFam" id="2.60.120.200:FF:000308">
    <property type="entry name" value="protein eyes shut"/>
    <property type="match status" value="1"/>
</dbReference>
<dbReference type="FunFam" id="2.10.25.10:FF:000045">
    <property type="entry name" value="Slit guidance ligand 2"/>
    <property type="match status" value="1"/>
</dbReference>
<dbReference type="FunFam" id="2.10.25.10:FF:000340">
    <property type="entry name" value="Terribly reduced optic lobes, isoform AT"/>
    <property type="match status" value="1"/>
</dbReference>
<dbReference type="FunFam" id="2.10.25.10:FF:000309">
    <property type="entry name" value="Uncharacterized protein, isoform A"/>
    <property type="match status" value="1"/>
</dbReference>
<dbReference type="Gene3D" id="2.60.120.200">
    <property type="match status" value="4"/>
</dbReference>
<dbReference type="Gene3D" id="2.10.25.10">
    <property type="entry name" value="Laminin"/>
    <property type="match status" value="12"/>
</dbReference>
<dbReference type="InterPro" id="IPR013320">
    <property type="entry name" value="ConA-like_dom_sf"/>
</dbReference>
<dbReference type="InterPro" id="IPR001881">
    <property type="entry name" value="EGF-like_Ca-bd_dom"/>
</dbReference>
<dbReference type="InterPro" id="IPR013032">
    <property type="entry name" value="EGF-like_CS"/>
</dbReference>
<dbReference type="InterPro" id="IPR000742">
    <property type="entry name" value="EGF-like_dom"/>
</dbReference>
<dbReference type="InterPro" id="IPR000152">
    <property type="entry name" value="EGF-type_Asp/Asn_hydroxyl_site"/>
</dbReference>
<dbReference type="InterPro" id="IPR018097">
    <property type="entry name" value="EGF_Ca-bd_CS"/>
</dbReference>
<dbReference type="InterPro" id="IPR001791">
    <property type="entry name" value="Laminin_G"/>
</dbReference>
<dbReference type="InterPro" id="IPR051022">
    <property type="entry name" value="Notch_Cell-Fate_Det"/>
</dbReference>
<dbReference type="PANTHER" id="PTHR24049">
    <property type="entry name" value="CRUMBS FAMILY MEMBER"/>
    <property type="match status" value="1"/>
</dbReference>
<dbReference type="Pfam" id="PF00008">
    <property type="entry name" value="EGF"/>
    <property type="match status" value="8"/>
</dbReference>
<dbReference type="Pfam" id="PF12661">
    <property type="entry name" value="hEGF"/>
    <property type="match status" value="1"/>
</dbReference>
<dbReference type="Pfam" id="PF02210">
    <property type="entry name" value="Laminin_G_2"/>
    <property type="match status" value="4"/>
</dbReference>
<dbReference type="PRINTS" id="PR00010">
    <property type="entry name" value="EGFBLOOD"/>
</dbReference>
<dbReference type="SMART" id="SM00181">
    <property type="entry name" value="EGF"/>
    <property type="match status" value="14"/>
</dbReference>
<dbReference type="SMART" id="SM00179">
    <property type="entry name" value="EGF_CA"/>
    <property type="match status" value="10"/>
</dbReference>
<dbReference type="SMART" id="SM00282">
    <property type="entry name" value="LamG"/>
    <property type="match status" value="4"/>
</dbReference>
<dbReference type="SUPFAM" id="SSF49899">
    <property type="entry name" value="Concanavalin A-like lectins/glucanases"/>
    <property type="match status" value="4"/>
</dbReference>
<dbReference type="SUPFAM" id="SSF57196">
    <property type="entry name" value="EGF/Laminin"/>
    <property type="match status" value="9"/>
</dbReference>
<dbReference type="PROSITE" id="PS00010">
    <property type="entry name" value="ASX_HYDROXYL"/>
    <property type="match status" value="4"/>
</dbReference>
<dbReference type="PROSITE" id="PS00022">
    <property type="entry name" value="EGF_1"/>
    <property type="match status" value="14"/>
</dbReference>
<dbReference type="PROSITE" id="PS01186">
    <property type="entry name" value="EGF_2"/>
    <property type="match status" value="8"/>
</dbReference>
<dbReference type="PROSITE" id="PS50026">
    <property type="entry name" value="EGF_3"/>
    <property type="match status" value="13"/>
</dbReference>
<dbReference type="PROSITE" id="PS01187">
    <property type="entry name" value="EGF_CA"/>
    <property type="match status" value="4"/>
</dbReference>
<dbReference type="PROSITE" id="PS50025">
    <property type="entry name" value="LAM_G_DOMAIN"/>
    <property type="match status" value="4"/>
</dbReference>